<keyword id="KW-0378">Hydrolase</keyword>
<keyword id="KW-0441">Lipid A biosynthesis</keyword>
<keyword id="KW-0444">Lipid biosynthesis</keyword>
<keyword id="KW-0443">Lipid metabolism</keyword>
<keyword id="KW-0479">Metal-binding</keyword>
<keyword id="KW-1185">Reference proteome</keyword>
<keyword id="KW-0862">Zinc</keyword>
<gene>
    <name evidence="1" type="primary">lpxC</name>
    <name type="ordered locus">HCH_05876</name>
</gene>
<evidence type="ECO:0000255" key="1">
    <source>
        <dbReference type="HAMAP-Rule" id="MF_00388"/>
    </source>
</evidence>
<protein>
    <recommendedName>
        <fullName evidence="1">UDP-3-O-acyl-N-acetylglucosamine deacetylase</fullName>
        <shortName evidence="1">UDP-3-O-acyl-GlcNAc deacetylase</shortName>
        <ecNumber evidence="1">3.5.1.108</ecNumber>
    </recommendedName>
    <alternativeName>
        <fullName evidence="1">UDP-3-O-[R-3-hydroxymyristoyl]-N-acetylglucosamine deacetylase</fullName>
    </alternativeName>
</protein>
<sequence length="302" mass="33171">MIKQRTLKNIIRATGVGLHSGEKVYLTLKPAPVDTGVVFCRTDLDPIVEIPARAENVGETLLSTTLVKSGVKIATVEHLLSALAGLGIDNCYVELSAAEVPIMDGSAGPFVFLIQSAGIAEQDAPKKFIRIKREVTVTDEDKRATFVPFDGFKVTFSIDFDHPVIKGRSQETVIDFSSTSFVKEVSRARTFGFMRDIEKLRAMNLALGGSMDNVIVVDDFKILNEDGLRYEDEFVKHKVLDAIGDLYLLGNSLIGEFKGHKSGHGLNNKLLRELLSQKDAWEVVTFEDAGEAPISYLKPVLA</sequence>
<name>LPXC_HAHCH</name>
<proteinExistence type="inferred from homology"/>
<comment type="function">
    <text evidence="1">Catalyzes the hydrolysis of UDP-3-O-myristoyl-N-acetylglucosamine to form UDP-3-O-myristoylglucosamine and acetate, the committed step in lipid A biosynthesis.</text>
</comment>
<comment type="catalytic activity">
    <reaction evidence="1">
        <text>a UDP-3-O-[(3R)-3-hydroxyacyl]-N-acetyl-alpha-D-glucosamine + H2O = a UDP-3-O-[(3R)-3-hydroxyacyl]-alpha-D-glucosamine + acetate</text>
        <dbReference type="Rhea" id="RHEA:67816"/>
        <dbReference type="ChEBI" id="CHEBI:15377"/>
        <dbReference type="ChEBI" id="CHEBI:30089"/>
        <dbReference type="ChEBI" id="CHEBI:137740"/>
        <dbReference type="ChEBI" id="CHEBI:173225"/>
        <dbReference type="EC" id="3.5.1.108"/>
    </reaction>
</comment>
<comment type="cofactor">
    <cofactor evidence="1">
        <name>Zn(2+)</name>
        <dbReference type="ChEBI" id="CHEBI:29105"/>
    </cofactor>
</comment>
<comment type="pathway">
    <text evidence="1">Glycolipid biosynthesis; lipid IV(A) biosynthesis; lipid IV(A) from (3R)-3-hydroxytetradecanoyl-[acyl-carrier-protein] and UDP-N-acetyl-alpha-D-glucosamine: step 2/6.</text>
</comment>
<comment type="similarity">
    <text evidence="1">Belongs to the LpxC family.</text>
</comment>
<accession>Q2S9Z8</accession>
<organism>
    <name type="scientific">Hahella chejuensis (strain KCTC 2396)</name>
    <dbReference type="NCBI Taxonomy" id="349521"/>
    <lineage>
        <taxon>Bacteria</taxon>
        <taxon>Pseudomonadati</taxon>
        <taxon>Pseudomonadota</taxon>
        <taxon>Gammaproteobacteria</taxon>
        <taxon>Oceanospirillales</taxon>
        <taxon>Hahellaceae</taxon>
        <taxon>Hahella</taxon>
    </lineage>
</organism>
<feature type="chain" id="PRO_0000253668" description="UDP-3-O-acyl-N-acetylglucosamine deacetylase">
    <location>
        <begin position="1"/>
        <end position="302"/>
    </location>
</feature>
<feature type="active site" description="Proton donor" evidence="1">
    <location>
        <position position="264"/>
    </location>
</feature>
<feature type="binding site" evidence="1">
    <location>
        <position position="78"/>
    </location>
    <ligand>
        <name>Zn(2+)</name>
        <dbReference type="ChEBI" id="CHEBI:29105"/>
    </ligand>
</feature>
<feature type="binding site" evidence="1">
    <location>
        <position position="237"/>
    </location>
    <ligand>
        <name>Zn(2+)</name>
        <dbReference type="ChEBI" id="CHEBI:29105"/>
    </ligand>
</feature>
<feature type="binding site" evidence="1">
    <location>
        <position position="241"/>
    </location>
    <ligand>
        <name>Zn(2+)</name>
        <dbReference type="ChEBI" id="CHEBI:29105"/>
    </ligand>
</feature>
<dbReference type="EC" id="3.5.1.108" evidence="1"/>
<dbReference type="EMBL" id="CP000155">
    <property type="protein sequence ID" value="ABC32526.1"/>
    <property type="molecule type" value="Genomic_DNA"/>
</dbReference>
<dbReference type="RefSeq" id="WP_011399585.1">
    <property type="nucleotide sequence ID" value="NC_007645.1"/>
</dbReference>
<dbReference type="SMR" id="Q2S9Z8"/>
<dbReference type="STRING" id="349521.HCH_05876"/>
<dbReference type="KEGG" id="hch:HCH_05876"/>
<dbReference type="eggNOG" id="COG0774">
    <property type="taxonomic scope" value="Bacteria"/>
</dbReference>
<dbReference type="HOGENOM" id="CLU_046528_1_0_6"/>
<dbReference type="OrthoDB" id="9802746at2"/>
<dbReference type="UniPathway" id="UPA00359">
    <property type="reaction ID" value="UER00478"/>
</dbReference>
<dbReference type="Proteomes" id="UP000000238">
    <property type="component" value="Chromosome"/>
</dbReference>
<dbReference type="GO" id="GO:0016020">
    <property type="term" value="C:membrane"/>
    <property type="evidence" value="ECO:0007669"/>
    <property type="project" value="GOC"/>
</dbReference>
<dbReference type="GO" id="GO:0046872">
    <property type="term" value="F:metal ion binding"/>
    <property type="evidence" value="ECO:0007669"/>
    <property type="project" value="UniProtKB-KW"/>
</dbReference>
<dbReference type="GO" id="GO:0103117">
    <property type="term" value="F:UDP-3-O-acyl-N-acetylglucosamine deacetylase activity"/>
    <property type="evidence" value="ECO:0007669"/>
    <property type="project" value="UniProtKB-UniRule"/>
</dbReference>
<dbReference type="GO" id="GO:0009245">
    <property type="term" value="P:lipid A biosynthetic process"/>
    <property type="evidence" value="ECO:0007669"/>
    <property type="project" value="UniProtKB-UniRule"/>
</dbReference>
<dbReference type="Gene3D" id="3.30.230.20">
    <property type="entry name" value="lpxc deacetylase, domain 1"/>
    <property type="match status" value="1"/>
</dbReference>
<dbReference type="Gene3D" id="3.30.1700.10">
    <property type="entry name" value="lpxc deacetylase, domain 2"/>
    <property type="match status" value="1"/>
</dbReference>
<dbReference type="HAMAP" id="MF_00388">
    <property type="entry name" value="LpxC"/>
    <property type="match status" value="1"/>
</dbReference>
<dbReference type="InterPro" id="IPR020568">
    <property type="entry name" value="Ribosomal_Su5_D2-typ_SF"/>
</dbReference>
<dbReference type="InterPro" id="IPR004463">
    <property type="entry name" value="UDP-acyl_GlcNac_deAcase"/>
</dbReference>
<dbReference type="InterPro" id="IPR011334">
    <property type="entry name" value="UDP-acyl_GlcNac_deAcase_C"/>
</dbReference>
<dbReference type="InterPro" id="IPR015870">
    <property type="entry name" value="UDP-acyl_N-AcGlcN_deAcase_N"/>
</dbReference>
<dbReference type="NCBIfam" id="TIGR00325">
    <property type="entry name" value="lpxC"/>
    <property type="match status" value="1"/>
</dbReference>
<dbReference type="PANTHER" id="PTHR33694">
    <property type="entry name" value="UDP-3-O-ACYL-N-ACETYLGLUCOSAMINE DEACETYLASE 1, MITOCHONDRIAL-RELATED"/>
    <property type="match status" value="1"/>
</dbReference>
<dbReference type="PANTHER" id="PTHR33694:SF1">
    <property type="entry name" value="UDP-3-O-ACYL-N-ACETYLGLUCOSAMINE DEACETYLASE 1, MITOCHONDRIAL-RELATED"/>
    <property type="match status" value="1"/>
</dbReference>
<dbReference type="Pfam" id="PF03331">
    <property type="entry name" value="LpxC"/>
    <property type="match status" value="1"/>
</dbReference>
<dbReference type="SUPFAM" id="SSF54211">
    <property type="entry name" value="Ribosomal protein S5 domain 2-like"/>
    <property type="match status" value="2"/>
</dbReference>
<reference key="1">
    <citation type="journal article" date="2005" name="Nucleic Acids Res.">
        <title>Genomic blueprint of Hahella chejuensis, a marine microbe producing an algicidal agent.</title>
        <authorList>
            <person name="Jeong H."/>
            <person name="Yim J.H."/>
            <person name="Lee C."/>
            <person name="Choi S.-H."/>
            <person name="Park Y.K."/>
            <person name="Yoon S.H."/>
            <person name="Hur C.-G."/>
            <person name="Kang H.-Y."/>
            <person name="Kim D."/>
            <person name="Lee H.H."/>
            <person name="Park K.H."/>
            <person name="Park S.-H."/>
            <person name="Park H.-S."/>
            <person name="Lee H.K."/>
            <person name="Oh T.K."/>
            <person name="Kim J.F."/>
        </authorList>
    </citation>
    <scope>NUCLEOTIDE SEQUENCE [LARGE SCALE GENOMIC DNA]</scope>
    <source>
        <strain>KCTC 2396</strain>
    </source>
</reference>